<gene>
    <name evidence="1" type="primary">tusC</name>
    <name type="ordered locus">SNSL254_A3720</name>
</gene>
<keyword id="KW-0963">Cytoplasm</keyword>
<keyword id="KW-0819">tRNA processing</keyword>
<dbReference type="EMBL" id="CP001113">
    <property type="protein sequence ID" value="ACF65450.1"/>
    <property type="molecule type" value="Genomic_DNA"/>
</dbReference>
<dbReference type="RefSeq" id="WP_000820705.1">
    <property type="nucleotide sequence ID" value="NZ_CCMR01000004.1"/>
</dbReference>
<dbReference type="SMR" id="B4SUV0"/>
<dbReference type="GeneID" id="66757785"/>
<dbReference type="KEGG" id="see:SNSL254_A3720"/>
<dbReference type="HOGENOM" id="CLU_155943_1_0_6"/>
<dbReference type="Proteomes" id="UP000008824">
    <property type="component" value="Chromosome"/>
</dbReference>
<dbReference type="GO" id="GO:0005737">
    <property type="term" value="C:cytoplasm"/>
    <property type="evidence" value="ECO:0007669"/>
    <property type="project" value="UniProtKB-SubCell"/>
</dbReference>
<dbReference type="GO" id="GO:0008033">
    <property type="term" value="P:tRNA processing"/>
    <property type="evidence" value="ECO:0007669"/>
    <property type="project" value="UniProtKB-UniRule"/>
</dbReference>
<dbReference type="Gene3D" id="3.40.1260.10">
    <property type="entry name" value="DsrEFH-like"/>
    <property type="match status" value="1"/>
</dbReference>
<dbReference type="HAMAP" id="MF_00389">
    <property type="entry name" value="Thiourid_synth_C"/>
    <property type="match status" value="1"/>
</dbReference>
<dbReference type="InterPro" id="IPR027396">
    <property type="entry name" value="DsrEFH-like"/>
</dbReference>
<dbReference type="InterPro" id="IPR003787">
    <property type="entry name" value="Sulphur_relay_DsrE/F-like"/>
</dbReference>
<dbReference type="InterPro" id="IPR037450">
    <property type="entry name" value="Sulphur_relay_TusC"/>
</dbReference>
<dbReference type="InterPro" id="IPR017462">
    <property type="entry name" value="Sulphur_relay_TusC/DsrF"/>
</dbReference>
<dbReference type="NCBIfam" id="NF001238">
    <property type="entry name" value="PRK00211.1"/>
    <property type="match status" value="1"/>
</dbReference>
<dbReference type="NCBIfam" id="TIGR03010">
    <property type="entry name" value="sulf_tusC_dsrF"/>
    <property type="match status" value="1"/>
</dbReference>
<dbReference type="PANTHER" id="PTHR38780">
    <property type="entry name" value="PROTEIN TUSC"/>
    <property type="match status" value="1"/>
</dbReference>
<dbReference type="PANTHER" id="PTHR38780:SF1">
    <property type="entry name" value="PROTEIN TUSC"/>
    <property type="match status" value="1"/>
</dbReference>
<dbReference type="Pfam" id="PF02635">
    <property type="entry name" value="DsrE"/>
    <property type="match status" value="1"/>
</dbReference>
<dbReference type="SUPFAM" id="SSF75169">
    <property type="entry name" value="DsrEFH-like"/>
    <property type="match status" value="1"/>
</dbReference>
<accession>B4SUV0</accession>
<reference key="1">
    <citation type="journal article" date="2011" name="J. Bacteriol.">
        <title>Comparative genomics of 28 Salmonella enterica isolates: evidence for CRISPR-mediated adaptive sublineage evolution.</title>
        <authorList>
            <person name="Fricke W.F."/>
            <person name="Mammel M.K."/>
            <person name="McDermott P.F."/>
            <person name="Tartera C."/>
            <person name="White D.G."/>
            <person name="Leclerc J.E."/>
            <person name="Ravel J."/>
            <person name="Cebula T.A."/>
        </authorList>
    </citation>
    <scope>NUCLEOTIDE SEQUENCE [LARGE SCALE GENOMIC DNA]</scope>
    <source>
        <strain>SL254</strain>
    </source>
</reference>
<sequence>MKRIAFVFSTAPHGSASGREGLDALLATSALTEALGVFFISDGVFQLLPGQKPDAVLARDYIATFKLFDLYDIDQCWICAASLRERGLENVNFVVDATPLEPVALRRELGNYDVILRF</sequence>
<evidence type="ECO:0000255" key="1">
    <source>
        <dbReference type="HAMAP-Rule" id="MF_00389"/>
    </source>
</evidence>
<name>TUSC_SALNS</name>
<organism>
    <name type="scientific">Salmonella newport (strain SL254)</name>
    <dbReference type="NCBI Taxonomy" id="423368"/>
    <lineage>
        <taxon>Bacteria</taxon>
        <taxon>Pseudomonadati</taxon>
        <taxon>Pseudomonadota</taxon>
        <taxon>Gammaproteobacteria</taxon>
        <taxon>Enterobacterales</taxon>
        <taxon>Enterobacteriaceae</taxon>
        <taxon>Salmonella</taxon>
    </lineage>
</organism>
<feature type="chain" id="PRO_1000122849" description="Protein TusC">
    <location>
        <begin position="1"/>
        <end position="118"/>
    </location>
</feature>
<protein>
    <recommendedName>
        <fullName evidence="1">Protein TusC</fullName>
    </recommendedName>
    <alternativeName>
        <fullName evidence="1">tRNA 2-thiouridine synthesizing protein C</fullName>
    </alternativeName>
</protein>
<proteinExistence type="inferred from homology"/>
<comment type="function">
    <text evidence="1">Part of a sulfur-relay system required for 2-thiolation of 5-methylaminomethyl-2-thiouridine (mnm(5)s(2)U) at tRNA wobble positions.</text>
</comment>
<comment type="subunit">
    <text evidence="1">Heterohexamer, formed by a dimer of trimers. The hexameric TusBCD complex contains 2 copies each of TusB, TusC and TusD. The TusBCD complex interacts with TusE.</text>
</comment>
<comment type="subcellular location">
    <subcellularLocation>
        <location evidence="1">Cytoplasm</location>
    </subcellularLocation>
</comment>
<comment type="similarity">
    <text evidence="1">Belongs to the DsrF/TusC family.</text>
</comment>